<proteinExistence type="inferred from homology"/>
<name>CPCF_SYNE7</name>
<sequence length="207" mass="21884">MSTELIAAVEAADSAEGLVRAVAALSAARTDAAIPTLISVLAFNNPGAAVVAVDGLIQLGSPAAQAILNNLDDYNYGARAWALRALAGIGEPAALPLLLSAAREDFSLSVRRAATYGLGRVRWADLSESDRLAQQQQCYETLKLCLQYDPEWVVRYAAAAALETLAPAATQLQSAIAETLNRQAHSDEERAVQARSRLAERRLAAGV</sequence>
<protein>
    <recommendedName>
        <fullName>Phycobilisome maturation protein</fullName>
    </recommendedName>
</protein>
<feature type="chain" id="PRO_0000199281" description="Phycobilisome maturation protein">
    <location>
        <begin position="1"/>
        <end position="207"/>
    </location>
</feature>
<organism>
    <name type="scientific">Synechococcus elongatus (strain ATCC 33912 / PCC 7942 / FACHB-805)</name>
    <name type="common">Anacystis nidulans R2</name>
    <dbReference type="NCBI Taxonomy" id="1140"/>
    <lineage>
        <taxon>Bacteria</taxon>
        <taxon>Bacillati</taxon>
        <taxon>Cyanobacteriota</taxon>
        <taxon>Cyanophyceae</taxon>
        <taxon>Synechococcales</taxon>
        <taxon>Synechococcaceae</taxon>
        <taxon>Synechococcus</taxon>
    </lineage>
</organism>
<comment type="function">
    <text evidence="1">Required for the chromophorylation of the cpcA gene product.</text>
</comment>
<comment type="subunit">
    <text evidence="1">CpcE and CpcF associate to form a lyase.</text>
</comment>
<comment type="similarity">
    <text evidence="2">Belongs to the CpcE/RpcE/PecE family.</text>
</comment>
<comment type="sequence caution" evidence="2">
    <conflict type="frameshift">
        <sequence resource="EMBL-CDS" id="AAA64534"/>
    </conflict>
</comment>
<reference key="1">
    <citation type="journal article" date="1994" name="Plant Mol. Biol.">
        <title>Cloning of the cpcE and cpcF genes from Synechococcus sp. PCC 6301 and their inactivation in Synechococcus sp. PCC 7942.</title>
        <authorList>
            <person name="Bhalerao R.P."/>
            <person name="Lind L.K."/>
            <person name="Gustafsson P."/>
        </authorList>
    </citation>
    <scope>NUCLEOTIDE SEQUENCE [GENOMIC DNA]</scope>
</reference>
<reference key="2">
    <citation type="submission" date="2005-08" db="EMBL/GenBank/DDBJ databases">
        <title>Complete sequence of chromosome 1 of Synechococcus elongatus PCC 7942.</title>
        <authorList>
            <consortium name="US DOE Joint Genome Institute"/>
            <person name="Copeland A."/>
            <person name="Lucas S."/>
            <person name="Lapidus A."/>
            <person name="Barry K."/>
            <person name="Detter J.C."/>
            <person name="Glavina T."/>
            <person name="Hammon N."/>
            <person name="Israni S."/>
            <person name="Pitluck S."/>
            <person name="Schmutz J."/>
            <person name="Larimer F."/>
            <person name="Land M."/>
            <person name="Kyrpides N."/>
            <person name="Lykidis A."/>
            <person name="Golden S."/>
            <person name="Richardson P."/>
        </authorList>
    </citation>
    <scope>NUCLEOTIDE SEQUENCE [LARGE SCALE GENOMIC DNA]</scope>
    <source>
        <strain>ATCC 33912 / PCC 7942 / FACHB-805</strain>
    </source>
</reference>
<gene>
    <name type="primary">cpcF</name>
    <name type="ordered locus">Synpcc7942_1055</name>
</gene>
<dbReference type="EMBL" id="M94218">
    <property type="protein sequence ID" value="AAA64534.1"/>
    <property type="status" value="ALT_FRAME"/>
    <property type="molecule type" value="Genomic_DNA"/>
</dbReference>
<dbReference type="EMBL" id="CP000100">
    <property type="protein sequence ID" value="ABB57085.1"/>
    <property type="molecule type" value="Genomic_DNA"/>
</dbReference>
<dbReference type="PIR" id="S52644">
    <property type="entry name" value="S52644"/>
</dbReference>
<dbReference type="RefSeq" id="WP_011377845.1">
    <property type="nucleotide sequence ID" value="NZ_JACJTX010000003.1"/>
</dbReference>
<dbReference type="SMR" id="Q44116"/>
<dbReference type="STRING" id="1140.Synpcc7942_1055"/>
<dbReference type="PaxDb" id="1140-Synpcc7942_1055"/>
<dbReference type="KEGG" id="syf:Synpcc7942_1055"/>
<dbReference type="eggNOG" id="COG1413">
    <property type="taxonomic scope" value="Bacteria"/>
</dbReference>
<dbReference type="HOGENOM" id="CLU_094955_0_0_3"/>
<dbReference type="OrthoDB" id="428465at2"/>
<dbReference type="BioCyc" id="MetaCyc:SYNPCC7942_1055-MONOMER"/>
<dbReference type="BioCyc" id="SYNEL:SYNPCC7942_1055-MONOMER"/>
<dbReference type="Proteomes" id="UP000889800">
    <property type="component" value="Chromosome"/>
</dbReference>
<dbReference type="GO" id="GO:0030089">
    <property type="term" value="C:phycobilisome"/>
    <property type="evidence" value="ECO:0007669"/>
    <property type="project" value="UniProtKB-KW"/>
</dbReference>
<dbReference type="GO" id="GO:0016829">
    <property type="term" value="F:lyase activity"/>
    <property type="evidence" value="ECO:0007669"/>
    <property type="project" value="UniProtKB-KW"/>
</dbReference>
<dbReference type="GO" id="GO:0016491">
    <property type="term" value="F:oxidoreductase activity"/>
    <property type="evidence" value="ECO:0007669"/>
    <property type="project" value="TreeGrafter"/>
</dbReference>
<dbReference type="Gene3D" id="1.25.10.10">
    <property type="entry name" value="Leucine-rich Repeat Variant"/>
    <property type="match status" value="1"/>
</dbReference>
<dbReference type="InterPro" id="IPR011989">
    <property type="entry name" value="ARM-like"/>
</dbReference>
<dbReference type="InterPro" id="IPR016024">
    <property type="entry name" value="ARM-type_fold"/>
</dbReference>
<dbReference type="InterPro" id="IPR004155">
    <property type="entry name" value="PBS_lyase_HEAT"/>
</dbReference>
<dbReference type="PANTHER" id="PTHR12697:SF5">
    <property type="entry name" value="DEOXYHYPUSINE HYDROXYLASE"/>
    <property type="match status" value="1"/>
</dbReference>
<dbReference type="PANTHER" id="PTHR12697">
    <property type="entry name" value="PBS LYASE HEAT-LIKE PROTEIN"/>
    <property type="match status" value="1"/>
</dbReference>
<dbReference type="Pfam" id="PF13646">
    <property type="entry name" value="HEAT_2"/>
    <property type="match status" value="1"/>
</dbReference>
<dbReference type="SMART" id="SM00567">
    <property type="entry name" value="EZ_HEAT"/>
    <property type="match status" value="3"/>
</dbReference>
<dbReference type="SUPFAM" id="SSF48371">
    <property type="entry name" value="ARM repeat"/>
    <property type="match status" value="1"/>
</dbReference>
<keyword id="KW-0042">Antenna complex</keyword>
<keyword id="KW-0456">Lyase</keyword>
<keyword id="KW-0605">Phycobilisome</keyword>
<keyword id="KW-1185">Reference proteome</keyword>
<accession>Q44116</accession>
<accession>Q31PD4</accession>
<evidence type="ECO:0000250" key="1"/>
<evidence type="ECO:0000305" key="2"/>